<dbReference type="EMBL" id="CP000850">
    <property type="protein sequence ID" value="ABW00036.1"/>
    <property type="molecule type" value="Genomic_DNA"/>
</dbReference>
<dbReference type="SMR" id="A8M4C0"/>
<dbReference type="STRING" id="391037.Sare_4254"/>
<dbReference type="KEGG" id="saq:Sare_4254"/>
<dbReference type="eggNOG" id="COG0102">
    <property type="taxonomic scope" value="Bacteria"/>
</dbReference>
<dbReference type="HOGENOM" id="CLU_082184_2_2_11"/>
<dbReference type="OrthoDB" id="9801330at2"/>
<dbReference type="GO" id="GO:0022625">
    <property type="term" value="C:cytosolic large ribosomal subunit"/>
    <property type="evidence" value="ECO:0007669"/>
    <property type="project" value="TreeGrafter"/>
</dbReference>
<dbReference type="GO" id="GO:0003729">
    <property type="term" value="F:mRNA binding"/>
    <property type="evidence" value="ECO:0007669"/>
    <property type="project" value="TreeGrafter"/>
</dbReference>
<dbReference type="GO" id="GO:0003735">
    <property type="term" value="F:structural constituent of ribosome"/>
    <property type="evidence" value="ECO:0007669"/>
    <property type="project" value="InterPro"/>
</dbReference>
<dbReference type="GO" id="GO:0017148">
    <property type="term" value="P:negative regulation of translation"/>
    <property type="evidence" value="ECO:0007669"/>
    <property type="project" value="TreeGrafter"/>
</dbReference>
<dbReference type="GO" id="GO:0006412">
    <property type="term" value="P:translation"/>
    <property type="evidence" value="ECO:0007669"/>
    <property type="project" value="UniProtKB-UniRule"/>
</dbReference>
<dbReference type="CDD" id="cd00392">
    <property type="entry name" value="Ribosomal_L13"/>
    <property type="match status" value="1"/>
</dbReference>
<dbReference type="FunFam" id="3.90.1180.10:FF:000001">
    <property type="entry name" value="50S ribosomal protein L13"/>
    <property type="match status" value="1"/>
</dbReference>
<dbReference type="Gene3D" id="3.90.1180.10">
    <property type="entry name" value="Ribosomal protein L13"/>
    <property type="match status" value="1"/>
</dbReference>
<dbReference type="HAMAP" id="MF_01366">
    <property type="entry name" value="Ribosomal_uL13"/>
    <property type="match status" value="1"/>
</dbReference>
<dbReference type="InterPro" id="IPR005822">
    <property type="entry name" value="Ribosomal_uL13"/>
</dbReference>
<dbReference type="InterPro" id="IPR005823">
    <property type="entry name" value="Ribosomal_uL13_bac-type"/>
</dbReference>
<dbReference type="InterPro" id="IPR023563">
    <property type="entry name" value="Ribosomal_uL13_CS"/>
</dbReference>
<dbReference type="InterPro" id="IPR036899">
    <property type="entry name" value="Ribosomal_uL13_sf"/>
</dbReference>
<dbReference type="NCBIfam" id="TIGR01066">
    <property type="entry name" value="rplM_bact"/>
    <property type="match status" value="1"/>
</dbReference>
<dbReference type="PANTHER" id="PTHR11545:SF2">
    <property type="entry name" value="LARGE RIBOSOMAL SUBUNIT PROTEIN UL13M"/>
    <property type="match status" value="1"/>
</dbReference>
<dbReference type="PANTHER" id="PTHR11545">
    <property type="entry name" value="RIBOSOMAL PROTEIN L13"/>
    <property type="match status" value="1"/>
</dbReference>
<dbReference type="Pfam" id="PF00572">
    <property type="entry name" value="Ribosomal_L13"/>
    <property type="match status" value="1"/>
</dbReference>
<dbReference type="PIRSF" id="PIRSF002181">
    <property type="entry name" value="Ribosomal_L13"/>
    <property type="match status" value="1"/>
</dbReference>
<dbReference type="SUPFAM" id="SSF52161">
    <property type="entry name" value="Ribosomal protein L13"/>
    <property type="match status" value="1"/>
</dbReference>
<dbReference type="PROSITE" id="PS00783">
    <property type="entry name" value="RIBOSOMAL_L13"/>
    <property type="match status" value="1"/>
</dbReference>
<gene>
    <name evidence="1" type="primary">rplM</name>
    <name type="ordered locus">Sare_4254</name>
</gene>
<feature type="chain" id="PRO_1000087103" description="Large ribosomal subunit protein uL13">
    <location>
        <begin position="1"/>
        <end position="147"/>
    </location>
</feature>
<evidence type="ECO:0000255" key="1">
    <source>
        <dbReference type="HAMAP-Rule" id="MF_01366"/>
    </source>
</evidence>
<evidence type="ECO:0000305" key="2"/>
<protein>
    <recommendedName>
        <fullName evidence="1">Large ribosomal subunit protein uL13</fullName>
    </recommendedName>
    <alternativeName>
        <fullName evidence="2">50S ribosomal protein L13</fullName>
    </alternativeName>
</protein>
<organism>
    <name type="scientific">Salinispora arenicola (strain CNS-205)</name>
    <dbReference type="NCBI Taxonomy" id="391037"/>
    <lineage>
        <taxon>Bacteria</taxon>
        <taxon>Bacillati</taxon>
        <taxon>Actinomycetota</taxon>
        <taxon>Actinomycetes</taxon>
        <taxon>Micromonosporales</taxon>
        <taxon>Micromonosporaceae</taxon>
        <taxon>Salinispora</taxon>
    </lineage>
</organism>
<keyword id="KW-0687">Ribonucleoprotein</keyword>
<keyword id="KW-0689">Ribosomal protein</keyword>
<proteinExistence type="inferred from homology"/>
<comment type="function">
    <text evidence="1">This protein is one of the early assembly proteins of the 50S ribosomal subunit, although it is not seen to bind rRNA by itself. It is important during the early stages of 50S assembly.</text>
</comment>
<comment type="subunit">
    <text evidence="1">Part of the 50S ribosomal subunit.</text>
</comment>
<comment type="similarity">
    <text evidence="1">Belongs to the universal ribosomal protein uL13 family.</text>
</comment>
<reference key="1">
    <citation type="submission" date="2007-10" db="EMBL/GenBank/DDBJ databases">
        <title>Complete sequence of Salinispora arenicola CNS-205.</title>
        <authorList>
            <consortium name="US DOE Joint Genome Institute"/>
            <person name="Copeland A."/>
            <person name="Lucas S."/>
            <person name="Lapidus A."/>
            <person name="Barry K."/>
            <person name="Glavina del Rio T."/>
            <person name="Dalin E."/>
            <person name="Tice H."/>
            <person name="Pitluck S."/>
            <person name="Foster B."/>
            <person name="Schmutz J."/>
            <person name="Larimer F."/>
            <person name="Land M."/>
            <person name="Hauser L."/>
            <person name="Kyrpides N."/>
            <person name="Ivanova N."/>
            <person name="Jensen P.R."/>
            <person name="Moore B.S."/>
            <person name="Penn K."/>
            <person name="Jenkins C."/>
            <person name="Udwary D."/>
            <person name="Xiang L."/>
            <person name="Gontang E."/>
            <person name="Richardson P."/>
        </authorList>
    </citation>
    <scope>NUCLEOTIDE SEQUENCE [LARGE SCALE GENOMIC DNA]</scope>
    <source>
        <strain>CNS-205</strain>
    </source>
</reference>
<name>RL13_SALAI</name>
<accession>A8M4C0</accession>
<sequence length="147" mass="16310">MRTYSPKPGEIERQWHVIDASDVVLGRLATHAATLLRGKHKPTFAPHVDTGDFVVIVNAGKVALTGNKRQQKIAYRHSGYPGGLKQLGYDELLTKRPERAIELAVKGMLPHNKLGRKLIKKLKVYAGAEHPHGAQQPVPFEIKQIAQ</sequence>